<accession>Q04EL5</accession>
<gene>
    <name evidence="1" type="primary">rpoZ</name>
    <name type="ordered locus">OEOE_1230</name>
</gene>
<evidence type="ECO:0000255" key="1">
    <source>
        <dbReference type="HAMAP-Rule" id="MF_00366"/>
    </source>
</evidence>
<name>RPOZ_OENOB</name>
<comment type="function">
    <text evidence="1">Promotes RNA polymerase assembly. Latches the N- and C-terminal regions of the beta' subunit thereby facilitating its interaction with the beta and alpha subunits.</text>
</comment>
<comment type="catalytic activity">
    <reaction evidence="1">
        <text>RNA(n) + a ribonucleoside 5'-triphosphate = RNA(n+1) + diphosphate</text>
        <dbReference type="Rhea" id="RHEA:21248"/>
        <dbReference type="Rhea" id="RHEA-COMP:14527"/>
        <dbReference type="Rhea" id="RHEA-COMP:17342"/>
        <dbReference type="ChEBI" id="CHEBI:33019"/>
        <dbReference type="ChEBI" id="CHEBI:61557"/>
        <dbReference type="ChEBI" id="CHEBI:140395"/>
        <dbReference type="EC" id="2.7.7.6"/>
    </reaction>
</comment>
<comment type="subunit">
    <text evidence="1">The RNAP catalytic core consists of 2 alpha, 1 beta, 1 beta' and 1 omega subunit. When a sigma factor is associated with the core the holoenzyme is formed, which can initiate transcription.</text>
</comment>
<comment type="similarity">
    <text evidence="1">Belongs to the RNA polymerase subunit omega family.</text>
</comment>
<organism>
    <name type="scientific">Oenococcus oeni (strain ATCC BAA-331 / PSU-1)</name>
    <dbReference type="NCBI Taxonomy" id="203123"/>
    <lineage>
        <taxon>Bacteria</taxon>
        <taxon>Bacillati</taxon>
        <taxon>Bacillota</taxon>
        <taxon>Bacilli</taxon>
        <taxon>Lactobacillales</taxon>
        <taxon>Lactobacillaceae</taxon>
        <taxon>Oenococcus</taxon>
    </lineage>
</organism>
<sequence>MSLMYPSVDELLNKVDSRYKLIALASKRAKELEELPRLKDELLKLKREEKPTDRDKKQIQEIAAQLETLVGPTLDNYKSVKPIGRALEEINAGNVQIDPVNKDKSED</sequence>
<dbReference type="EC" id="2.7.7.6" evidence="1"/>
<dbReference type="EMBL" id="CP000411">
    <property type="protein sequence ID" value="ABJ57107.1"/>
    <property type="molecule type" value="Genomic_DNA"/>
</dbReference>
<dbReference type="RefSeq" id="WP_002816998.1">
    <property type="nucleotide sequence ID" value="NC_008528.1"/>
</dbReference>
<dbReference type="SMR" id="Q04EL5"/>
<dbReference type="STRING" id="203123.OEOE_1230"/>
<dbReference type="GeneID" id="75065667"/>
<dbReference type="KEGG" id="ooe:OEOE_1230"/>
<dbReference type="eggNOG" id="COG1758">
    <property type="taxonomic scope" value="Bacteria"/>
</dbReference>
<dbReference type="HOGENOM" id="CLU_125406_6_0_9"/>
<dbReference type="Proteomes" id="UP000000774">
    <property type="component" value="Chromosome"/>
</dbReference>
<dbReference type="GO" id="GO:0000428">
    <property type="term" value="C:DNA-directed RNA polymerase complex"/>
    <property type="evidence" value="ECO:0007669"/>
    <property type="project" value="UniProtKB-KW"/>
</dbReference>
<dbReference type="GO" id="GO:0003677">
    <property type="term" value="F:DNA binding"/>
    <property type="evidence" value="ECO:0007669"/>
    <property type="project" value="UniProtKB-UniRule"/>
</dbReference>
<dbReference type="GO" id="GO:0003899">
    <property type="term" value="F:DNA-directed RNA polymerase activity"/>
    <property type="evidence" value="ECO:0007669"/>
    <property type="project" value="UniProtKB-UniRule"/>
</dbReference>
<dbReference type="GO" id="GO:0006351">
    <property type="term" value="P:DNA-templated transcription"/>
    <property type="evidence" value="ECO:0007669"/>
    <property type="project" value="UniProtKB-UniRule"/>
</dbReference>
<dbReference type="Gene3D" id="3.90.940.10">
    <property type="match status" value="1"/>
</dbReference>
<dbReference type="HAMAP" id="MF_00366">
    <property type="entry name" value="RNApol_bact_RpoZ"/>
    <property type="match status" value="1"/>
</dbReference>
<dbReference type="InterPro" id="IPR003716">
    <property type="entry name" value="DNA-dir_RNA_pol_omega"/>
</dbReference>
<dbReference type="InterPro" id="IPR006110">
    <property type="entry name" value="Pol_omega/Rpo6/RPB6"/>
</dbReference>
<dbReference type="InterPro" id="IPR036161">
    <property type="entry name" value="RPB6/omega-like_sf"/>
</dbReference>
<dbReference type="NCBIfam" id="TIGR00690">
    <property type="entry name" value="rpoZ"/>
    <property type="match status" value="1"/>
</dbReference>
<dbReference type="PANTHER" id="PTHR34476">
    <property type="entry name" value="DNA-DIRECTED RNA POLYMERASE SUBUNIT OMEGA"/>
    <property type="match status" value="1"/>
</dbReference>
<dbReference type="PANTHER" id="PTHR34476:SF1">
    <property type="entry name" value="DNA-DIRECTED RNA POLYMERASE SUBUNIT OMEGA"/>
    <property type="match status" value="1"/>
</dbReference>
<dbReference type="Pfam" id="PF01192">
    <property type="entry name" value="RNA_pol_Rpb6"/>
    <property type="match status" value="1"/>
</dbReference>
<dbReference type="SMART" id="SM01409">
    <property type="entry name" value="RNA_pol_Rpb6"/>
    <property type="match status" value="1"/>
</dbReference>
<dbReference type="SUPFAM" id="SSF63562">
    <property type="entry name" value="RPB6/omega subunit-like"/>
    <property type="match status" value="1"/>
</dbReference>
<protein>
    <recommendedName>
        <fullName evidence="1">DNA-directed RNA polymerase subunit omega</fullName>
        <shortName evidence="1">RNAP omega subunit</shortName>
        <ecNumber evidence="1">2.7.7.6</ecNumber>
    </recommendedName>
    <alternativeName>
        <fullName evidence="1">RNA polymerase omega subunit</fullName>
    </alternativeName>
    <alternativeName>
        <fullName evidence="1">Transcriptase subunit omega</fullName>
    </alternativeName>
</protein>
<proteinExistence type="inferred from homology"/>
<keyword id="KW-0240">DNA-directed RNA polymerase</keyword>
<keyword id="KW-0548">Nucleotidyltransferase</keyword>
<keyword id="KW-1185">Reference proteome</keyword>
<keyword id="KW-0804">Transcription</keyword>
<keyword id="KW-0808">Transferase</keyword>
<feature type="chain" id="PRO_1000005969" description="DNA-directed RNA polymerase subunit omega">
    <location>
        <begin position="1"/>
        <end position="107"/>
    </location>
</feature>
<reference key="1">
    <citation type="journal article" date="2006" name="Proc. Natl. Acad. Sci. U.S.A.">
        <title>Comparative genomics of the lactic acid bacteria.</title>
        <authorList>
            <person name="Makarova K.S."/>
            <person name="Slesarev A."/>
            <person name="Wolf Y.I."/>
            <person name="Sorokin A."/>
            <person name="Mirkin B."/>
            <person name="Koonin E.V."/>
            <person name="Pavlov A."/>
            <person name="Pavlova N."/>
            <person name="Karamychev V."/>
            <person name="Polouchine N."/>
            <person name="Shakhova V."/>
            <person name="Grigoriev I."/>
            <person name="Lou Y."/>
            <person name="Rohksar D."/>
            <person name="Lucas S."/>
            <person name="Huang K."/>
            <person name="Goodstein D.M."/>
            <person name="Hawkins T."/>
            <person name="Plengvidhya V."/>
            <person name="Welker D."/>
            <person name="Hughes J."/>
            <person name="Goh Y."/>
            <person name="Benson A."/>
            <person name="Baldwin K."/>
            <person name="Lee J.-H."/>
            <person name="Diaz-Muniz I."/>
            <person name="Dosti B."/>
            <person name="Smeianov V."/>
            <person name="Wechter W."/>
            <person name="Barabote R."/>
            <person name="Lorca G."/>
            <person name="Altermann E."/>
            <person name="Barrangou R."/>
            <person name="Ganesan B."/>
            <person name="Xie Y."/>
            <person name="Rawsthorne H."/>
            <person name="Tamir D."/>
            <person name="Parker C."/>
            <person name="Breidt F."/>
            <person name="Broadbent J.R."/>
            <person name="Hutkins R."/>
            <person name="O'Sullivan D."/>
            <person name="Steele J."/>
            <person name="Unlu G."/>
            <person name="Saier M.H. Jr."/>
            <person name="Klaenhammer T."/>
            <person name="Richardson P."/>
            <person name="Kozyavkin S."/>
            <person name="Weimer B.C."/>
            <person name="Mills D.A."/>
        </authorList>
    </citation>
    <scope>NUCLEOTIDE SEQUENCE [LARGE SCALE GENOMIC DNA]</scope>
    <source>
        <strain>ATCC BAA-331 / PSU-1</strain>
    </source>
</reference>